<gene>
    <name evidence="1" type="primary">rpsM</name>
    <name type="ordered locus">GOX0358</name>
</gene>
<evidence type="ECO:0000255" key="1">
    <source>
        <dbReference type="HAMAP-Rule" id="MF_01315"/>
    </source>
</evidence>
<evidence type="ECO:0000305" key="2"/>
<organism>
    <name type="scientific">Gluconobacter oxydans (strain 621H)</name>
    <name type="common">Gluconobacter suboxydans</name>
    <dbReference type="NCBI Taxonomy" id="290633"/>
    <lineage>
        <taxon>Bacteria</taxon>
        <taxon>Pseudomonadati</taxon>
        <taxon>Pseudomonadota</taxon>
        <taxon>Alphaproteobacteria</taxon>
        <taxon>Acetobacterales</taxon>
        <taxon>Acetobacteraceae</taxon>
        <taxon>Gluconobacter</taxon>
    </lineage>
</organism>
<accession>Q5FU05</accession>
<protein>
    <recommendedName>
        <fullName evidence="1">Small ribosomal subunit protein uS13</fullName>
    </recommendedName>
    <alternativeName>
        <fullName evidence="2">30S ribosomal protein S13</fullName>
    </alternativeName>
</protein>
<name>RS13_GLUOX</name>
<proteinExistence type="inferred from homology"/>
<feature type="chain" id="PRO_0000230512" description="Small ribosomal subunit protein uS13">
    <location>
        <begin position="1"/>
        <end position="125"/>
    </location>
</feature>
<sequence>MARIAGVNIPTNKRVVIALRYVYGIGPSTAQSICNKLEIPDAKRVNELSDDEIVKIRELIDSELRVEGDLRRETAMNIKRLMDLGCYRGLRHRRGLPVRGQRTHTNARTRKGKAVAIAGKKKVTR</sequence>
<keyword id="KW-1185">Reference proteome</keyword>
<keyword id="KW-0687">Ribonucleoprotein</keyword>
<keyword id="KW-0689">Ribosomal protein</keyword>
<keyword id="KW-0694">RNA-binding</keyword>
<keyword id="KW-0699">rRNA-binding</keyword>
<keyword id="KW-0820">tRNA-binding</keyword>
<reference key="1">
    <citation type="journal article" date="2005" name="Nat. Biotechnol.">
        <title>Complete genome sequence of the acetic acid bacterium Gluconobacter oxydans.</title>
        <authorList>
            <person name="Prust C."/>
            <person name="Hoffmeister M."/>
            <person name="Liesegang H."/>
            <person name="Wiezer A."/>
            <person name="Fricke W.F."/>
            <person name="Ehrenreich A."/>
            <person name="Gottschalk G."/>
            <person name="Deppenmeier U."/>
        </authorList>
    </citation>
    <scope>NUCLEOTIDE SEQUENCE [LARGE SCALE GENOMIC DNA]</scope>
    <source>
        <strain>621H</strain>
    </source>
</reference>
<dbReference type="EMBL" id="CP000009">
    <property type="protein sequence ID" value="AAW60141.1"/>
    <property type="molecule type" value="Genomic_DNA"/>
</dbReference>
<dbReference type="RefSeq" id="WP_011251944.1">
    <property type="nucleotide sequence ID" value="NZ_LT900338.1"/>
</dbReference>
<dbReference type="SMR" id="Q5FU05"/>
<dbReference type="STRING" id="290633.GOX0358"/>
<dbReference type="GeneID" id="56904624"/>
<dbReference type="KEGG" id="gox:GOX0358"/>
<dbReference type="eggNOG" id="COG0099">
    <property type="taxonomic scope" value="Bacteria"/>
</dbReference>
<dbReference type="HOGENOM" id="CLU_103849_1_2_5"/>
<dbReference type="Proteomes" id="UP000006375">
    <property type="component" value="Chromosome"/>
</dbReference>
<dbReference type="GO" id="GO:0005829">
    <property type="term" value="C:cytosol"/>
    <property type="evidence" value="ECO:0007669"/>
    <property type="project" value="TreeGrafter"/>
</dbReference>
<dbReference type="GO" id="GO:0015935">
    <property type="term" value="C:small ribosomal subunit"/>
    <property type="evidence" value="ECO:0007669"/>
    <property type="project" value="TreeGrafter"/>
</dbReference>
<dbReference type="GO" id="GO:0019843">
    <property type="term" value="F:rRNA binding"/>
    <property type="evidence" value="ECO:0007669"/>
    <property type="project" value="UniProtKB-UniRule"/>
</dbReference>
<dbReference type="GO" id="GO:0003735">
    <property type="term" value="F:structural constituent of ribosome"/>
    <property type="evidence" value="ECO:0007669"/>
    <property type="project" value="InterPro"/>
</dbReference>
<dbReference type="GO" id="GO:0000049">
    <property type="term" value="F:tRNA binding"/>
    <property type="evidence" value="ECO:0007669"/>
    <property type="project" value="UniProtKB-UniRule"/>
</dbReference>
<dbReference type="GO" id="GO:0006412">
    <property type="term" value="P:translation"/>
    <property type="evidence" value="ECO:0007669"/>
    <property type="project" value="UniProtKB-UniRule"/>
</dbReference>
<dbReference type="FunFam" id="1.10.8.50:FF:000001">
    <property type="entry name" value="30S ribosomal protein S13"/>
    <property type="match status" value="1"/>
</dbReference>
<dbReference type="FunFam" id="4.10.910.10:FF:000001">
    <property type="entry name" value="30S ribosomal protein S13"/>
    <property type="match status" value="1"/>
</dbReference>
<dbReference type="Gene3D" id="1.10.8.50">
    <property type="match status" value="1"/>
</dbReference>
<dbReference type="Gene3D" id="4.10.910.10">
    <property type="entry name" value="30s ribosomal protein s13, domain 2"/>
    <property type="match status" value="1"/>
</dbReference>
<dbReference type="HAMAP" id="MF_01315">
    <property type="entry name" value="Ribosomal_uS13"/>
    <property type="match status" value="1"/>
</dbReference>
<dbReference type="InterPro" id="IPR027437">
    <property type="entry name" value="Rbsml_uS13_C"/>
</dbReference>
<dbReference type="InterPro" id="IPR001892">
    <property type="entry name" value="Ribosomal_uS13"/>
</dbReference>
<dbReference type="InterPro" id="IPR010979">
    <property type="entry name" value="Ribosomal_uS13-like_H2TH"/>
</dbReference>
<dbReference type="InterPro" id="IPR019980">
    <property type="entry name" value="Ribosomal_uS13_bac-type"/>
</dbReference>
<dbReference type="InterPro" id="IPR018269">
    <property type="entry name" value="Ribosomal_uS13_CS"/>
</dbReference>
<dbReference type="NCBIfam" id="TIGR03631">
    <property type="entry name" value="uS13_bact"/>
    <property type="match status" value="1"/>
</dbReference>
<dbReference type="PANTHER" id="PTHR10871">
    <property type="entry name" value="30S RIBOSOMAL PROTEIN S13/40S RIBOSOMAL PROTEIN S18"/>
    <property type="match status" value="1"/>
</dbReference>
<dbReference type="PANTHER" id="PTHR10871:SF1">
    <property type="entry name" value="SMALL RIBOSOMAL SUBUNIT PROTEIN US13M"/>
    <property type="match status" value="1"/>
</dbReference>
<dbReference type="Pfam" id="PF00416">
    <property type="entry name" value="Ribosomal_S13"/>
    <property type="match status" value="1"/>
</dbReference>
<dbReference type="PIRSF" id="PIRSF002134">
    <property type="entry name" value="Ribosomal_S13"/>
    <property type="match status" value="1"/>
</dbReference>
<dbReference type="SUPFAM" id="SSF46946">
    <property type="entry name" value="S13-like H2TH domain"/>
    <property type="match status" value="1"/>
</dbReference>
<dbReference type="PROSITE" id="PS00646">
    <property type="entry name" value="RIBOSOMAL_S13_1"/>
    <property type="match status" value="1"/>
</dbReference>
<dbReference type="PROSITE" id="PS50159">
    <property type="entry name" value="RIBOSOMAL_S13_2"/>
    <property type="match status" value="1"/>
</dbReference>
<comment type="function">
    <text evidence="1">Located at the top of the head of the 30S subunit, it contacts several helices of the 16S rRNA. In the 70S ribosome it contacts the 23S rRNA (bridge B1a) and protein L5 of the 50S subunit (bridge B1b), connecting the 2 subunits; these bridges are implicated in subunit movement. Contacts the tRNAs in the A and P-sites.</text>
</comment>
<comment type="subunit">
    <text evidence="1">Part of the 30S ribosomal subunit. Forms a loose heterodimer with protein S19. Forms two bridges to the 50S subunit in the 70S ribosome.</text>
</comment>
<comment type="similarity">
    <text evidence="1">Belongs to the universal ribosomal protein uS13 family.</text>
</comment>